<sequence>QTGVRSCNCAGRSFTGTDVTNAIRSARAGGSGNYPHVYNNFEGFSFSCTPTFFEFPVFRGSVYSGGSPGADRVIYDQSGRFCACLTHTGAPSTNGFVECRF</sequence>
<comment type="catalytic activity">
    <reaction>
        <text>[RNA] containing guanosine + H2O = an [RNA fragment]-3'-guanosine-3'-phosphate + a 5'-hydroxy-ribonucleotide-3'-[RNA fragment].</text>
        <dbReference type="EC" id="4.6.1.24"/>
    </reaction>
</comment>
<comment type="activity regulation">
    <text>Inhibited by divalent cations. Inhibition decreases in the order zinc, lead, cadmium, nickel, mercury.</text>
</comment>
<comment type="similarity">
    <text evidence="4">Belongs to the ribonuclease N1/T1 family.</text>
</comment>
<reference key="1">
    <citation type="journal article" date="1994" name="J. Biochem.">
        <title>Purification and primary structure of a new guanylic acid specific ribonuclease from Pleurotus ostreatus.</title>
        <authorList>
            <person name="Nomura H."/>
            <person name="Inokuchi N."/>
            <person name="Kobayashi H."/>
            <person name="Koyama T."/>
            <person name="Iwama M."/>
            <person name="Ohgi K."/>
            <person name="Irie M."/>
        </authorList>
    </citation>
    <scope>PROTEIN SEQUENCE</scope>
    <scope>PYROGLUTAMATE FORMATION AT GLN-1</scope>
    <scope>CHARACTERIZATION</scope>
</reference>
<proteinExistence type="evidence at protein level"/>
<accession>P81762</accession>
<keyword id="KW-0002">3D-structure</keyword>
<keyword id="KW-0903">Direct protein sequencing</keyword>
<keyword id="KW-1015">Disulfide bond</keyword>
<keyword id="KW-0255">Endonuclease</keyword>
<keyword id="KW-0378">Hydrolase</keyword>
<keyword id="KW-0456">Lyase</keyword>
<keyword id="KW-0540">Nuclease</keyword>
<keyword id="KW-0873">Pyrrolidone carboxylic acid</keyword>
<protein>
    <recommendedName>
        <fullName>Guanyl-specific ribonuclease Po1</fullName>
        <shortName>RNase Po1</shortName>
        <ecNumber>4.6.1.24</ecNumber>
    </recommendedName>
</protein>
<evidence type="ECO:0000250" key="1"/>
<evidence type="ECO:0000255" key="2"/>
<evidence type="ECO:0000269" key="3">
    <source>
    </source>
</evidence>
<evidence type="ECO:0000305" key="4"/>
<evidence type="ECO:0007829" key="5">
    <source>
        <dbReference type="PDB" id="3WHO"/>
    </source>
</evidence>
<evidence type="ECO:0007829" key="6">
    <source>
        <dbReference type="PDB" id="3WR2"/>
    </source>
</evidence>
<name>RNPO_PLEOS</name>
<organism>
    <name type="scientific">Pleurotus ostreatus</name>
    <name type="common">Oyster mushroom</name>
    <name type="synonym">White-rot fungus</name>
    <dbReference type="NCBI Taxonomy" id="5322"/>
    <lineage>
        <taxon>Eukaryota</taxon>
        <taxon>Fungi</taxon>
        <taxon>Dikarya</taxon>
        <taxon>Basidiomycota</taxon>
        <taxon>Agaricomycotina</taxon>
        <taxon>Agaricomycetes</taxon>
        <taxon>Agaricomycetidae</taxon>
        <taxon>Agaricales</taxon>
        <taxon>Pleurotineae</taxon>
        <taxon>Pleurotaceae</taxon>
        <taxon>Pleurotus</taxon>
    </lineage>
</organism>
<dbReference type="EC" id="4.6.1.24"/>
<dbReference type="PIR" id="JX0333">
    <property type="entry name" value="JX0333"/>
</dbReference>
<dbReference type="PDB" id="3WHO">
    <property type="method" value="X-ray"/>
    <property type="resolution" value="1.85 A"/>
    <property type="chains" value="A/B/C=1-101"/>
</dbReference>
<dbReference type="PDB" id="3WR2">
    <property type="method" value="X-ray"/>
    <property type="resolution" value="1.75 A"/>
    <property type="chains" value="A/B/C/D/E/F=1-101"/>
</dbReference>
<dbReference type="PDBsum" id="3WHO"/>
<dbReference type="PDBsum" id="3WR2"/>
<dbReference type="SMR" id="P81762"/>
<dbReference type="VEuPathDB" id="FungiDB:PC9H_003443"/>
<dbReference type="VEuPathDB" id="FungiDB:PLEOSDRAFT_1088612"/>
<dbReference type="BRENDA" id="4.6.1.24">
    <property type="organism ID" value="4912"/>
</dbReference>
<dbReference type="EvolutionaryTrace" id="P81762"/>
<dbReference type="GO" id="GO:0016829">
    <property type="term" value="F:lyase activity"/>
    <property type="evidence" value="ECO:0007669"/>
    <property type="project" value="UniProtKB-KW"/>
</dbReference>
<dbReference type="GO" id="GO:0046589">
    <property type="term" value="F:ribonuclease T1 activity"/>
    <property type="evidence" value="ECO:0007669"/>
    <property type="project" value="UniProtKB-EC"/>
</dbReference>
<dbReference type="GO" id="GO:0003723">
    <property type="term" value="F:RNA binding"/>
    <property type="evidence" value="ECO:0007669"/>
    <property type="project" value="InterPro"/>
</dbReference>
<dbReference type="GO" id="GO:0004521">
    <property type="term" value="F:RNA endonuclease activity"/>
    <property type="evidence" value="ECO:0007669"/>
    <property type="project" value="InterPro"/>
</dbReference>
<dbReference type="CDD" id="cd00606">
    <property type="entry name" value="fungal_RNase"/>
    <property type="match status" value="1"/>
</dbReference>
<dbReference type="Gene3D" id="3.10.450.30">
    <property type="entry name" value="Microbial ribonucleases"/>
    <property type="match status" value="1"/>
</dbReference>
<dbReference type="InterPro" id="IPR000026">
    <property type="entry name" value="N1-like"/>
</dbReference>
<dbReference type="InterPro" id="IPR016191">
    <property type="entry name" value="Ribonuclease/ribotoxin"/>
</dbReference>
<dbReference type="InterPro" id="IPR051386">
    <property type="entry name" value="Ribonuclease_N1/T1"/>
</dbReference>
<dbReference type="PANTHER" id="PTHR42104">
    <property type="entry name" value="EXTRACELLULAR GUANYL-SPECIFIC RIBONUCLEASE RNTA (AFU_ORTHOLOGUE AFUA_4G03230)"/>
    <property type="match status" value="1"/>
</dbReference>
<dbReference type="PANTHER" id="PTHR42104:SF1">
    <property type="entry name" value="EXTRACELLULAR GUANYL-SPECIFIC RIBONUCLEASE RNTA (AFU_ORTHOLOGUE AFUA_4G03230)"/>
    <property type="match status" value="1"/>
</dbReference>
<dbReference type="Pfam" id="PF00545">
    <property type="entry name" value="Ribonuclease"/>
    <property type="match status" value="1"/>
</dbReference>
<dbReference type="SUPFAM" id="SSF53933">
    <property type="entry name" value="Microbial ribonucleases"/>
    <property type="match status" value="1"/>
</dbReference>
<feature type="chain" id="PRO_0000137374" description="Guanyl-specific ribonuclease Po1">
    <location>
        <begin position="1"/>
        <end position="101"/>
    </location>
</feature>
<feature type="active site" evidence="1">
    <location>
        <position position="36"/>
    </location>
</feature>
<feature type="active site" description="Proton acceptor" evidence="1">
    <location>
        <position position="54"/>
    </location>
</feature>
<feature type="active site" description="Proton donor" evidence="1">
    <location>
        <position position="87"/>
    </location>
</feature>
<feature type="modified residue" description="Pyrrolidone carboxylic acid" evidence="3">
    <location>
        <position position="1"/>
    </location>
</feature>
<feature type="disulfide bond" evidence="2">
    <location>
        <begin position="7"/>
        <end position="84"/>
    </location>
</feature>
<feature type="disulfide bond" evidence="1">
    <location>
        <begin position="9"/>
        <end position="99"/>
    </location>
</feature>
<feature type="disulfide bond" evidence="1">
    <location>
        <begin position="48"/>
        <end position="82"/>
    </location>
</feature>
<feature type="strand" evidence="6">
    <location>
        <begin position="7"/>
        <end position="9"/>
    </location>
</feature>
<feature type="strand" evidence="6">
    <location>
        <begin position="12"/>
        <end position="14"/>
    </location>
</feature>
<feature type="helix" evidence="6">
    <location>
        <begin position="16"/>
        <end position="27"/>
    </location>
</feature>
<feature type="strand" evidence="6">
    <location>
        <begin position="34"/>
        <end position="38"/>
    </location>
</feature>
<feature type="strand" evidence="6">
    <location>
        <begin position="50"/>
        <end position="56"/>
    </location>
</feature>
<feature type="strand" evidence="6">
    <location>
        <begin position="59"/>
        <end position="61"/>
    </location>
</feature>
<feature type="strand" evidence="6">
    <location>
        <begin position="70"/>
        <end position="76"/>
    </location>
</feature>
<feature type="strand" evidence="6">
    <location>
        <begin position="80"/>
        <end position="87"/>
    </location>
</feature>
<feature type="strand" evidence="5">
    <location>
        <begin position="91"/>
        <end position="94"/>
    </location>
</feature>